<evidence type="ECO:0000255" key="1">
    <source>
        <dbReference type="HAMAP-Rule" id="MF_01682"/>
    </source>
</evidence>
<keyword id="KW-0028">Amino-acid biosynthesis</keyword>
<keyword id="KW-0223">Dioxygenase</keyword>
<keyword id="KW-0408">Iron</keyword>
<keyword id="KW-0479">Metal-binding</keyword>
<keyword id="KW-0486">Methionine biosynthesis</keyword>
<keyword id="KW-0533">Nickel</keyword>
<keyword id="KW-0560">Oxidoreductase</keyword>
<comment type="function">
    <text evidence="1">Catalyzes 2 different reactions between oxygen and the acireductone 1,2-dihydroxy-3-keto-5-methylthiopentene (DHK-MTPene) depending upon the metal bound in the active site. Fe-containing acireductone dioxygenase (Fe-ARD) produces formate and 2-keto-4-methylthiobutyrate (KMTB), the alpha-ketoacid precursor of methionine in the methionine recycle pathway. Ni-containing acireductone dioxygenase (Ni-ARD) produces methylthiopropionate, carbon monoxide and formate, and does not lie on the methionine recycle pathway.</text>
</comment>
<comment type="catalytic activity">
    <reaction evidence="1">
        <text>1,2-dihydroxy-5-(methylsulfanyl)pent-1-en-3-one + O2 = 3-(methylsulfanyl)propanoate + CO + formate + 2 H(+)</text>
        <dbReference type="Rhea" id="RHEA:14161"/>
        <dbReference type="ChEBI" id="CHEBI:15378"/>
        <dbReference type="ChEBI" id="CHEBI:15379"/>
        <dbReference type="ChEBI" id="CHEBI:15740"/>
        <dbReference type="ChEBI" id="CHEBI:17245"/>
        <dbReference type="ChEBI" id="CHEBI:49016"/>
        <dbReference type="ChEBI" id="CHEBI:49252"/>
        <dbReference type="EC" id="1.13.11.53"/>
    </reaction>
</comment>
<comment type="catalytic activity">
    <reaction evidence="1">
        <text>1,2-dihydroxy-5-(methylsulfanyl)pent-1-en-3-one + O2 = 4-methylsulfanyl-2-oxobutanoate + formate + 2 H(+)</text>
        <dbReference type="Rhea" id="RHEA:24504"/>
        <dbReference type="ChEBI" id="CHEBI:15378"/>
        <dbReference type="ChEBI" id="CHEBI:15379"/>
        <dbReference type="ChEBI" id="CHEBI:15740"/>
        <dbReference type="ChEBI" id="CHEBI:16723"/>
        <dbReference type="ChEBI" id="CHEBI:49252"/>
        <dbReference type="EC" id="1.13.11.54"/>
    </reaction>
</comment>
<comment type="cofactor">
    <cofactor evidence="1">
        <name>Fe(2+)</name>
        <dbReference type="ChEBI" id="CHEBI:29033"/>
    </cofactor>
    <text evidence="1">Binds 1 Fe(2+) cation per monomer.</text>
</comment>
<comment type="cofactor">
    <cofactor evidence="1">
        <name>Ni(2+)</name>
        <dbReference type="ChEBI" id="CHEBI:49786"/>
    </cofactor>
    <text evidence="1">Binds 1 nickel ion per monomer.</text>
</comment>
<comment type="pathway">
    <text evidence="1">Amino-acid biosynthesis; L-methionine biosynthesis via salvage pathway; L-methionine from S-methyl-5-thio-alpha-D-ribose 1-phosphate: step 5/6.</text>
</comment>
<comment type="subunit">
    <text evidence="1">Monomer.</text>
</comment>
<comment type="similarity">
    <text evidence="1">Belongs to the acireductone dioxygenase (ARD) family.</text>
</comment>
<organism>
    <name type="scientific">Klebsiella pneumoniae subsp. pneumoniae (strain ATCC 700721 / MGH 78578)</name>
    <dbReference type="NCBI Taxonomy" id="272620"/>
    <lineage>
        <taxon>Bacteria</taxon>
        <taxon>Pseudomonadati</taxon>
        <taxon>Pseudomonadota</taxon>
        <taxon>Gammaproteobacteria</taxon>
        <taxon>Enterobacterales</taxon>
        <taxon>Enterobacteriaceae</taxon>
        <taxon>Klebsiella/Raoultella group</taxon>
        <taxon>Klebsiella</taxon>
        <taxon>Klebsiella pneumoniae complex</taxon>
    </lineage>
</organism>
<gene>
    <name evidence="1" type="primary">mtnD</name>
    <name type="ordered locus">KPN78578_06320</name>
    <name type="ORF">KPN_00643</name>
</gene>
<accession>A6T672</accession>
<protein>
    <recommendedName>
        <fullName evidence="1">Acireductone dioxygenase</fullName>
    </recommendedName>
    <alternativeName>
        <fullName evidence="1">1,2-dihydroxy-3-keto-5-methylthiopentene dioxygenase</fullName>
        <shortName evidence="1">DHK-MTPene dioxygenase</shortName>
    </alternativeName>
    <alternativeName>
        <fullName evidence="1">Acireductone dioxygenase (Fe(2+)-requiring)</fullName>
        <shortName evidence="1">ARD'</shortName>
        <shortName evidence="1">Fe-ARD</shortName>
        <ecNumber evidence="1">1.13.11.54</ecNumber>
    </alternativeName>
    <alternativeName>
        <fullName evidence="1">Acireductone dioxygenase (Ni(2+)-requiring)</fullName>
        <shortName evidence="1">ARD</shortName>
        <shortName evidence="1">Ni-ARD</shortName>
        <ecNumber evidence="1">1.13.11.53</ecNumber>
    </alternativeName>
</protein>
<proteinExistence type="inferred from homology"/>
<reference key="1">
    <citation type="submission" date="2006-09" db="EMBL/GenBank/DDBJ databases">
        <authorList>
            <consortium name="The Klebsiella pneumonia Genome Sequencing Project"/>
            <person name="McClelland M."/>
            <person name="Sanderson E.K."/>
            <person name="Spieth J."/>
            <person name="Clifton W.S."/>
            <person name="Latreille P."/>
            <person name="Sabo A."/>
            <person name="Pepin K."/>
            <person name="Bhonagiri V."/>
            <person name="Porwollik S."/>
            <person name="Ali J."/>
            <person name="Wilson R.K."/>
        </authorList>
    </citation>
    <scope>NUCLEOTIDE SEQUENCE [LARGE SCALE GENOMIC DNA]</scope>
    <source>
        <strain>ATCC 700721 / MGH 78578</strain>
    </source>
</reference>
<name>MTND_KLEP7</name>
<feature type="chain" id="PRO_0000359201" description="Acireductone dioxygenase">
    <location>
        <begin position="1"/>
        <end position="180"/>
    </location>
</feature>
<feature type="binding site" evidence="1">
    <location>
        <position position="97"/>
    </location>
    <ligand>
        <name>Fe(2+)</name>
        <dbReference type="ChEBI" id="CHEBI:29033"/>
    </ligand>
</feature>
<feature type="binding site" evidence="1">
    <location>
        <position position="97"/>
    </location>
    <ligand>
        <name>Ni(2+)</name>
        <dbReference type="ChEBI" id="CHEBI:49786"/>
    </ligand>
</feature>
<feature type="binding site" evidence="1">
    <location>
        <position position="99"/>
    </location>
    <ligand>
        <name>Fe(2+)</name>
        <dbReference type="ChEBI" id="CHEBI:29033"/>
    </ligand>
</feature>
<feature type="binding site" evidence="1">
    <location>
        <position position="99"/>
    </location>
    <ligand>
        <name>Ni(2+)</name>
        <dbReference type="ChEBI" id="CHEBI:49786"/>
    </ligand>
</feature>
<feature type="binding site" evidence="1">
    <location>
        <position position="103"/>
    </location>
    <ligand>
        <name>Fe(2+)</name>
        <dbReference type="ChEBI" id="CHEBI:29033"/>
    </ligand>
</feature>
<feature type="binding site" evidence="1">
    <location>
        <position position="103"/>
    </location>
    <ligand>
        <name>Ni(2+)</name>
        <dbReference type="ChEBI" id="CHEBI:49786"/>
    </ligand>
</feature>
<feature type="binding site" evidence="1">
    <location>
        <position position="141"/>
    </location>
    <ligand>
        <name>Fe(2+)</name>
        <dbReference type="ChEBI" id="CHEBI:29033"/>
    </ligand>
</feature>
<feature type="binding site" evidence="1">
    <location>
        <position position="141"/>
    </location>
    <ligand>
        <name>Ni(2+)</name>
        <dbReference type="ChEBI" id="CHEBI:49786"/>
    </ligand>
</feature>
<feature type="site" description="May play a role in metal incorporation in vivo" evidence="1">
    <location>
        <position position="96"/>
    </location>
</feature>
<feature type="site" description="May play a role in transmitting local conformational changes" evidence="1">
    <location>
        <position position="102"/>
    </location>
</feature>
<feature type="site" description="Important to generate the dianion" evidence="1">
    <location>
        <position position="105"/>
    </location>
</feature>
<sequence>MSALTLFSVTDPQTPVWHSTDAKAIQAQLNAKGVRFERWQADRDLGANPSPETVIAAYQHAIDKLVAEKGYQSWDVISLRADNPQKEALREKFLNEHTHGEDEVRFFVEGAGLFCLHIGDEVFQVLCEKNDLISVPAHTPHWFDMGSEPNFTAIRIFDNPEGWIAQFTGDDIASAYPRLA</sequence>
<dbReference type="EC" id="1.13.11.54" evidence="1"/>
<dbReference type="EC" id="1.13.11.53" evidence="1"/>
<dbReference type="EMBL" id="CP000647">
    <property type="protein sequence ID" value="ABR76093.1"/>
    <property type="molecule type" value="Genomic_DNA"/>
</dbReference>
<dbReference type="RefSeq" id="WP_009485199.1">
    <property type="nucleotide sequence ID" value="NC_009648.1"/>
</dbReference>
<dbReference type="SMR" id="A6T672"/>
<dbReference type="STRING" id="272620.KPN_00643"/>
<dbReference type="PaxDb" id="272620-KPN_00643"/>
<dbReference type="EnsemblBacteria" id="ABR76093">
    <property type="protein sequence ID" value="ABR76093"/>
    <property type="gene ID" value="KPN_00643"/>
</dbReference>
<dbReference type="KEGG" id="kpn:KPN_00643"/>
<dbReference type="HOGENOM" id="CLU_125400_0_0_6"/>
<dbReference type="UniPathway" id="UPA00904">
    <property type="reaction ID" value="UER00878"/>
</dbReference>
<dbReference type="Proteomes" id="UP000000265">
    <property type="component" value="Chromosome"/>
</dbReference>
<dbReference type="GO" id="GO:0010308">
    <property type="term" value="F:acireductone dioxygenase (Ni2+-requiring) activity"/>
    <property type="evidence" value="ECO:0007669"/>
    <property type="project" value="UniProtKB-UniRule"/>
</dbReference>
<dbReference type="GO" id="GO:0010309">
    <property type="term" value="F:acireductone dioxygenase [iron(II)-requiring] activity"/>
    <property type="evidence" value="ECO:0007669"/>
    <property type="project" value="UniProtKB-UniRule"/>
</dbReference>
<dbReference type="GO" id="GO:0005506">
    <property type="term" value="F:iron ion binding"/>
    <property type="evidence" value="ECO:0007669"/>
    <property type="project" value="UniProtKB-UniRule"/>
</dbReference>
<dbReference type="GO" id="GO:0016151">
    <property type="term" value="F:nickel cation binding"/>
    <property type="evidence" value="ECO:0007669"/>
    <property type="project" value="UniProtKB-UniRule"/>
</dbReference>
<dbReference type="GO" id="GO:0019509">
    <property type="term" value="P:L-methionine salvage from methylthioadenosine"/>
    <property type="evidence" value="ECO:0007669"/>
    <property type="project" value="UniProtKB-UniRule"/>
</dbReference>
<dbReference type="GO" id="GO:0019284">
    <property type="term" value="P:L-methionine salvage from S-adenosylmethionine"/>
    <property type="evidence" value="ECO:0007669"/>
    <property type="project" value="InterPro"/>
</dbReference>
<dbReference type="CDD" id="cd02232">
    <property type="entry name" value="cupin_ARD"/>
    <property type="match status" value="1"/>
</dbReference>
<dbReference type="Gene3D" id="2.60.120.10">
    <property type="entry name" value="Jelly Rolls"/>
    <property type="match status" value="1"/>
</dbReference>
<dbReference type="HAMAP" id="MF_01682">
    <property type="entry name" value="Salvage_MtnD"/>
    <property type="match status" value="1"/>
</dbReference>
<dbReference type="InterPro" id="IPR004313">
    <property type="entry name" value="ARD"/>
</dbReference>
<dbReference type="InterPro" id="IPR023956">
    <property type="entry name" value="ARD_bac"/>
</dbReference>
<dbReference type="InterPro" id="IPR014710">
    <property type="entry name" value="RmlC-like_jellyroll"/>
</dbReference>
<dbReference type="InterPro" id="IPR011051">
    <property type="entry name" value="RmlC_Cupin_sf"/>
</dbReference>
<dbReference type="PANTHER" id="PTHR23418">
    <property type="entry name" value="ACIREDUCTONE DIOXYGENASE"/>
    <property type="match status" value="1"/>
</dbReference>
<dbReference type="PANTHER" id="PTHR23418:SF0">
    <property type="entry name" value="ACIREDUCTONE DIOXYGENASE"/>
    <property type="match status" value="1"/>
</dbReference>
<dbReference type="Pfam" id="PF03079">
    <property type="entry name" value="ARD"/>
    <property type="match status" value="1"/>
</dbReference>
<dbReference type="SUPFAM" id="SSF51182">
    <property type="entry name" value="RmlC-like cupins"/>
    <property type="match status" value="1"/>
</dbReference>